<reference key="1">
    <citation type="submission" date="2005-03" db="EMBL/GenBank/DDBJ databases">
        <title>Brevibacillus brevis strain 47, complete genome.</title>
        <authorList>
            <person name="Hosoyama A."/>
            <person name="Yamada R."/>
            <person name="Hongo Y."/>
            <person name="Terui Y."/>
            <person name="Ankai A."/>
            <person name="Masuyama W."/>
            <person name="Sekiguchi M."/>
            <person name="Takeda T."/>
            <person name="Asano K."/>
            <person name="Ohji S."/>
            <person name="Ichikawa N."/>
            <person name="Narita S."/>
            <person name="Aoki N."/>
            <person name="Miura H."/>
            <person name="Matsushita S."/>
            <person name="Sekigawa T."/>
            <person name="Yamagata H."/>
            <person name="Yoshikawa H."/>
            <person name="Udaka S."/>
            <person name="Tanikawa S."/>
            <person name="Fujita N."/>
        </authorList>
    </citation>
    <scope>NUCLEOTIDE SEQUENCE [LARGE SCALE GENOMIC DNA]</scope>
    <source>
        <strain>47 / JCM 6285 / NBRC 100599</strain>
    </source>
</reference>
<evidence type="ECO:0000255" key="1">
    <source>
        <dbReference type="HAMAP-Rule" id="MF_00494"/>
    </source>
</evidence>
<sequence length="214" mass="23333">MRFLIDTANVEEIREIHEWGVLAGVTTNPSLVAKEGRDFVETLKEILDIVDGPISAEVISTDAKGMIEEGEKLAALSKNIVIKLPMTAEGLKATKYFAKRKIRTNVTLVFSANQALLAARAGASFVSPFLGRLDDIGQDGMQLIEDIAEIFSVHGIDTEIIAASVRHPVHVTEAARRGSHFATIPAKVFKQLIAHPLTDSGLEKFLADWASMQK</sequence>
<organism>
    <name type="scientific">Brevibacillus brevis (strain 47 / JCM 6285 / NBRC 100599)</name>
    <dbReference type="NCBI Taxonomy" id="358681"/>
    <lineage>
        <taxon>Bacteria</taxon>
        <taxon>Bacillati</taxon>
        <taxon>Bacillota</taxon>
        <taxon>Bacilli</taxon>
        <taxon>Bacillales</taxon>
        <taxon>Paenibacillaceae</taxon>
        <taxon>Brevibacillus</taxon>
    </lineage>
</organism>
<keyword id="KW-0963">Cytoplasm</keyword>
<keyword id="KW-0570">Pentose shunt</keyword>
<keyword id="KW-1185">Reference proteome</keyword>
<keyword id="KW-0704">Schiff base</keyword>
<keyword id="KW-0808">Transferase</keyword>
<proteinExistence type="inferred from homology"/>
<gene>
    <name evidence="1" type="primary">tal</name>
    <name type="ordered locus">BBR47_54880</name>
</gene>
<name>TAL_BREBN</name>
<accession>C0Z838</accession>
<dbReference type="EC" id="2.2.1.2" evidence="1"/>
<dbReference type="EMBL" id="AP008955">
    <property type="protein sequence ID" value="BAH46465.1"/>
    <property type="molecule type" value="Genomic_DNA"/>
</dbReference>
<dbReference type="SMR" id="C0Z838"/>
<dbReference type="STRING" id="358681.BBR47_54880"/>
<dbReference type="KEGG" id="bbe:BBR47_54880"/>
<dbReference type="eggNOG" id="COG0176">
    <property type="taxonomic scope" value="Bacteria"/>
</dbReference>
<dbReference type="HOGENOM" id="CLU_079764_0_0_9"/>
<dbReference type="UniPathway" id="UPA00115">
    <property type="reaction ID" value="UER00414"/>
</dbReference>
<dbReference type="Proteomes" id="UP000001877">
    <property type="component" value="Chromosome"/>
</dbReference>
<dbReference type="GO" id="GO:0005737">
    <property type="term" value="C:cytoplasm"/>
    <property type="evidence" value="ECO:0007669"/>
    <property type="project" value="UniProtKB-SubCell"/>
</dbReference>
<dbReference type="GO" id="GO:0016832">
    <property type="term" value="F:aldehyde-lyase activity"/>
    <property type="evidence" value="ECO:0007669"/>
    <property type="project" value="InterPro"/>
</dbReference>
<dbReference type="GO" id="GO:0004801">
    <property type="term" value="F:transaldolase activity"/>
    <property type="evidence" value="ECO:0007669"/>
    <property type="project" value="UniProtKB-UniRule"/>
</dbReference>
<dbReference type="GO" id="GO:0005975">
    <property type="term" value="P:carbohydrate metabolic process"/>
    <property type="evidence" value="ECO:0007669"/>
    <property type="project" value="InterPro"/>
</dbReference>
<dbReference type="GO" id="GO:0006098">
    <property type="term" value="P:pentose-phosphate shunt"/>
    <property type="evidence" value="ECO:0007669"/>
    <property type="project" value="UniProtKB-UniRule"/>
</dbReference>
<dbReference type="CDD" id="cd00956">
    <property type="entry name" value="Transaldolase_FSA"/>
    <property type="match status" value="1"/>
</dbReference>
<dbReference type="FunFam" id="3.20.20.70:FF:000018">
    <property type="entry name" value="Probable transaldolase"/>
    <property type="match status" value="1"/>
</dbReference>
<dbReference type="Gene3D" id="3.20.20.70">
    <property type="entry name" value="Aldolase class I"/>
    <property type="match status" value="1"/>
</dbReference>
<dbReference type="HAMAP" id="MF_00494">
    <property type="entry name" value="Transaldolase_3b"/>
    <property type="match status" value="1"/>
</dbReference>
<dbReference type="InterPro" id="IPR013785">
    <property type="entry name" value="Aldolase_TIM"/>
</dbReference>
<dbReference type="InterPro" id="IPR001585">
    <property type="entry name" value="TAL/FSA"/>
</dbReference>
<dbReference type="InterPro" id="IPR022999">
    <property type="entry name" value="Transaldolase_3B"/>
</dbReference>
<dbReference type="InterPro" id="IPR004731">
    <property type="entry name" value="Transaldolase_3B/F6P_aldolase"/>
</dbReference>
<dbReference type="InterPro" id="IPR018225">
    <property type="entry name" value="Transaldolase_AS"/>
</dbReference>
<dbReference type="InterPro" id="IPR033919">
    <property type="entry name" value="TSA/FSA_arc/bac"/>
</dbReference>
<dbReference type="NCBIfam" id="TIGR00875">
    <property type="entry name" value="fsa_talC_mipB"/>
    <property type="match status" value="1"/>
</dbReference>
<dbReference type="PANTHER" id="PTHR10683">
    <property type="entry name" value="TRANSALDOLASE"/>
    <property type="match status" value="1"/>
</dbReference>
<dbReference type="PANTHER" id="PTHR10683:SF36">
    <property type="entry name" value="TRANSALDOLASE"/>
    <property type="match status" value="1"/>
</dbReference>
<dbReference type="Pfam" id="PF00923">
    <property type="entry name" value="TAL_FSA"/>
    <property type="match status" value="1"/>
</dbReference>
<dbReference type="SUPFAM" id="SSF51569">
    <property type="entry name" value="Aldolase"/>
    <property type="match status" value="1"/>
</dbReference>
<dbReference type="PROSITE" id="PS01054">
    <property type="entry name" value="TRANSALDOLASE_1"/>
    <property type="match status" value="1"/>
</dbReference>
<dbReference type="PROSITE" id="PS00958">
    <property type="entry name" value="TRANSALDOLASE_2"/>
    <property type="match status" value="1"/>
</dbReference>
<protein>
    <recommendedName>
        <fullName evidence="1">Probable transaldolase</fullName>
        <ecNumber evidence="1">2.2.1.2</ecNumber>
    </recommendedName>
</protein>
<comment type="function">
    <text evidence="1">Transaldolase is important for the balance of metabolites in the pentose-phosphate pathway.</text>
</comment>
<comment type="catalytic activity">
    <reaction evidence="1">
        <text>D-sedoheptulose 7-phosphate + D-glyceraldehyde 3-phosphate = D-erythrose 4-phosphate + beta-D-fructose 6-phosphate</text>
        <dbReference type="Rhea" id="RHEA:17053"/>
        <dbReference type="ChEBI" id="CHEBI:16897"/>
        <dbReference type="ChEBI" id="CHEBI:57483"/>
        <dbReference type="ChEBI" id="CHEBI:57634"/>
        <dbReference type="ChEBI" id="CHEBI:59776"/>
        <dbReference type="EC" id="2.2.1.2"/>
    </reaction>
</comment>
<comment type="pathway">
    <text evidence="1">Carbohydrate degradation; pentose phosphate pathway; D-glyceraldehyde 3-phosphate and beta-D-fructose 6-phosphate from D-ribose 5-phosphate and D-xylulose 5-phosphate (non-oxidative stage): step 2/3.</text>
</comment>
<comment type="subcellular location">
    <subcellularLocation>
        <location evidence="1">Cytoplasm</location>
    </subcellularLocation>
</comment>
<comment type="similarity">
    <text evidence="1">Belongs to the transaldolase family. Type 3B subfamily.</text>
</comment>
<feature type="chain" id="PRO_1000198467" description="Probable transaldolase">
    <location>
        <begin position="1"/>
        <end position="214"/>
    </location>
</feature>
<feature type="active site" description="Schiff-base intermediate with substrate" evidence="1">
    <location>
        <position position="83"/>
    </location>
</feature>